<keyword id="KW-0143">Chaperone</keyword>
<keyword id="KW-0963">Cytoplasm</keyword>
<keyword id="KW-0235">DNA replication</keyword>
<keyword id="KW-0479">Metal-binding</keyword>
<keyword id="KW-0677">Repeat</keyword>
<keyword id="KW-0346">Stress response</keyword>
<keyword id="KW-0862">Zinc</keyword>
<keyword id="KW-0863">Zinc-finger</keyword>
<protein>
    <recommendedName>
        <fullName evidence="1">Chaperone protein DnaJ</fullName>
    </recommendedName>
</protein>
<organism>
    <name type="scientific">Salmonella newport (strain SL254)</name>
    <dbReference type="NCBI Taxonomy" id="423368"/>
    <lineage>
        <taxon>Bacteria</taxon>
        <taxon>Pseudomonadati</taxon>
        <taxon>Pseudomonadota</taxon>
        <taxon>Gammaproteobacteria</taxon>
        <taxon>Enterobacterales</taxon>
        <taxon>Enterobacteriaceae</taxon>
        <taxon>Salmonella</taxon>
    </lineage>
</organism>
<evidence type="ECO:0000255" key="1">
    <source>
        <dbReference type="HAMAP-Rule" id="MF_01152"/>
    </source>
</evidence>
<gene>
    <name evidence="1" type="primary">dnaJ</name>
    <name type="ordered locus">SNSL254_A0014</name>
</gene>
<sequence length="379" mass="41313">MAKRDYYEILGVSKTAEEREIKKAYKRLAMKYHPDRNQGDKEAEAKFKEIKEAYEVLTDAQKRAAYDQYGHAAFEQGGMGGGFGGGFNGGADFSDIFGDVFGDIFGGGRGRQRAARGADLRYNMDLTLEEAVRGVTKEIRIPTLEECDVCHGSGAKAGTQPQTCPTCHGSGQVQMRQGFFAVQQTCPHCQGRGTLIKDPCHKCHGHGRVEKSKTLSVKIPAGVDTGDRIRLAGEGEAGEHGAPAGDLYVQVQVKQHPIFEREGNNLYCEVPINFAMAALGGEIEVPTLDGRVMLKVPSETQTGKLFRMRGKGVKSVRGGAQGDLLCRVVVETPVGLSEKQKQLLKDLQESFGGPTGEKNSPRSKSFFDGVKKFFDDLTR</sequence>
<accession>B4T6D7</accession>
<proteinExistence type="inferred from homology"/>
<comment type="function">
    <text evidence="1">Participates actively in the response to hyperosmotic and heat shock by preventing the aggregation of stress-denatured proteins and by disaggregating proteins, also in an autonomous, DnaK-independent fashion. Unfolded proteins bind initially to DnaJ; upon interaction with the DnaJ-bound protein, DnaK hydrolyzes its bound ATP, resulting in the formation of a stable complex. GrpE releases ADP from DnaK; ATP binding to DnaK triggers the release of the substrate protein, thus completing the reaction cycle. Several rounds of ATP-dependent interactions between DnaJ, DnaK and GrpE are required for fully efficient folding. Also involved, together with DnaK and GrpE, in the DNA replication of plasmids through activation of initiation proteins.</text>
</comment>
<comment type="cofactor">
    <cofactor evidence="1">
        <name>Zn(2+)</name>
        <dbReference type="ChEBI" id="CHEBI:29105"/>
    </cofactor>
    <text evidence="1">Binds 2 Zn(2+) ions per monomer.</text>
</comment>
<comment type="subunit">
    <text evidence="1">Homodimer.</text>
</comment>
<comment type="subcellular location">
    <subcellularLocation>
        <location evidence="1">Cytoplasm</location>
    </subcellularLocation>
</comment>
<comment type="domain">
    <text evidence="1">The J domain is necessary and sufficient to stimulate DnaK ATPase activity. Zinc center 1 plays an important role in the autonomous, DnaK-independent chaperone activity of DnaJ. Zinc center 2 is essential for interaction with DnaK and for DnaJ activity.</text>
</comment>
<comment type="similarity">
    <text evidence="1">Belongs to the DnaJ family.</text>
</comment>
<name>DNAJ_SALNS</name>
<dbReference type="EMBL" id="CP001113">
    <property type="protein sequence ID" value="ACF62587.1"/>
    <property type="molecule type" value="Genomic_DNA"/>
</dbReference>
<dbReference type="RefSeq" id="WP_001119009.1">
    <property type="nucleotide sequence ID" value="NZ_CCMR01000003.1"/>
</dbReference>
<dbReference type="SMR" id="B4T6D7"/>
<dbReference type="KEGG" id="see:SNSL254_A0014"/>
<dbReference type="HOGENOM" id="CLU_017633_0_7_6"/>
<dbReference type="Proteomes" id="UP000008824">
    <property type="component" value="Chromosome"/>
</dbReference>
<dbReference type="GO" id="GO:0005737">
    <property type="term" value="C:cytoplasm"/>
    <property type="evidence" value="ECO:0007669"/>
    <property type="project" value="UniProtKB-SubCell"/>
</dbReference>
<dbReference type="GO" id="GO:0005524">
    <property type="term" value="F:ATP binding"/>
    <property type="evidence" value="ECO:0007669"/>
    <property type="project" value="InterPro"/>
</dbReference>
<dbReference type="GO" id="GO:0031072">
    <property type="term" value="F:heat shock protein binding"/>
    <property type="evidence" value="ECO:0007669"/>
    <property type="project" value="InterPro"/>
</dbReference>
<dbReference type="GO" id="GO:0051082">
    <property type="term" value="F:unfolded protein binding"/>
    <property type="evidence" value="ECO:0007669"/>
    <property type="project" value="UniProtKB-UniRule"/>
</dbReference>
<dbReference type="GO" id="GO:0008270">
    <property type="term" value="F:zinc ion binding"/>
    <property type="evidence" value="ECO:0007669"/>
    <property type="project" value="UniProtKB-UniRule"/>
</dbReference>
<dbReference type="GO" id="GO:0051085">
    <property type="term" value="P:chaperone cofactor-dependent protein refolding"/>
    <property type="evidence" value="ECO:0007669"/>
    <property type="project" value="TreeGrafter"/>
</dbReference>
<dbReference type="GO" id="GO:0006260">
    <property type="term" value="P:DNA replication"/>
    <property type="evidence" value="ECO:0007669"/>
    <property type="project" value="UniProtKB-KW"/>
</dbReference>
<dbReference type="GO" id="GO:0042026">
    <property type="term" value="P:protein refolding"/>
    <property type="evidence" value="ECO:0007669"/>
    <property type="project" value="TreeGrafter"/>
</dbReference>
<dbReference type="GO" id="GO:0009408">
    <property type="term" value="P:response to heat"/>
    <property type="evidence" value="ECO:0007669"/>
    <property type="project" value="InterPro"/>
</dbReference>
<dbReference type="CDD" id="cd06257">
    <property type="entry name" value="DnaJ"/>
    <property type="match status" value="1"/>
</dbReference>
<dbReference type="CDD" id="cd10747">
    <property type="entry name" value="DnaJ_C"/>
    <property type="match status" value="1"/>
</dbReference>
<dbReference type="CDD" id="cd10719">
    <property type="entry name" value="DnaJ_zf"/>
    <property type="match status" value="1"/>
</dbReference>
<dbReference type="FunFam" id="1.10.287.110:FF:000003">
    <property type="entry name" value="Molecular chaperone DnaJ"/>
    <property type="match status" value="1"/>
</dbReference>
<dbReference type="FunFam" id="2.10.230.10:FF:000002">
    <property type="entry name" value="Molecular chaperone DnaJ"/>
    <property type="match status" value="1"/>
</dbReference>
<dbReference type="FunFam" id="2.60.260.20:FF:000004">
    <property type="entry name" value="Molecular chaperone DnaJ"/>
    <property type="match status" value="1"/>
</dbReference>
<dbReference type="Gene3D" id="1.10.287.110">
    <property type="entry name" value="DnaJ domain"/>
    <property type="match status" value="1"/>
</dbReference>
<dbReference type="Gene3D" id="2.10.230.10">
    <property type="entry name" value="Heat shock protein DnaJ, cysteine-rich domain"/>
    <property type="match status" value="1"/>
</dbReference>
<dbReference type="Gene3D" id="2.60.260.20">
    <property type="entry name" value="Urease metallochaperone UreE, N-terminal domain"/>
    <property type="match status" value="2"/>
</dbReference>
<dbReference type="HAMAP" id="MF_01152">
    <property type="entry name" value="DnaJ"/>
    <property type="match status" value="1"/>
</dbReference>
<dbReference type="InterPro" id="IPR012724">
    <property type="entry name" value="DnaJ"/>
</dbReference>
<dbReference type="InterPro" id="IPR002939">
    <property type="entry name" value="DnaJ_C"/>
</dbReference>
<dbReference type="InterPro" id="IPR001623">
    <property type="entry name" value="DnaJ_domain"/>
</dbReference>
<dbReference type="InterPro" id="IPR018253">
    <property type="entry name" value="DnaJ_domain_CS"/>
</dbReference>
<dbReference type="InterPro" id="IPR008971">
    <property type="entry name" value="HSP40/DnaJ_pept-bd"/>
</dbReference>
<dbReference type="InterPro" id="IPR001305">
    <property type="entry name" value="HSP_DnaJ_Cys-rich_dom"/>
</dbReference>
<dbReference type="InterPro" id="IPR036410">
    <property type="entry name" value="HSP_DnaJ_Cys-rich_dom_sf"/>
</dbReference>
<dbReference type="InterPro" id="IPR036869">
    <property type="entry name" value="J_dom_sf"/>
</dbReference>
<dbReference type="NCBIfam" id="TIGR02349">
    <property type="entry name" value="DnaJ_bact"/>
    <property type="match status" value="1"/>
</dbReference>
<dbReference type="NCBIfam" id="NF008035">
    <property type="entry name" value="PRK10767.1"/>
    <property type="match status" value="1"/>
</dbReference>
<dbReference type="PANTHER" id="PTHR43096:SF48">
    <property type="entry name" value="CHAPERONE PROTEIN DNAJ"/>
    <property type="match status" value="1"/>
</dbReference>
<dbReference type="PANTHER" id="PTHR43096">
    <property type="entry name" value="DNAJ HOMOLOG 1, MITOCHONDRIAL-RELATED"/>
    <property type="match status" value="1"/>
</dbReference>
<dbReference type="Pfam" id="PF00226">
    <property type="entry name" value="DnaJ"/>
    <property type="match status" value="1"/>
</dbReference>
<dbReference type="Pfam" id="PF01556">
    <property type="entry name" value="DnaJ_C"/>
    <property type="match status" value="1"/>
</dbReference>
<dbReference type="Pfam" id="PF00684">
    <property type="entry name" value="DnaJ_CXXCXGXG"/>
    <property type="match status" value="1"/>
</dbReference>
<dbReference type="PRINTS" id="PR00625">
    <property type="entry name" value="JDOMAIN"/>
</dbReference>
<dbReference type="SMART" id="SM00271">
    <property type="entry name" value="DnaJ"/>
    <property type="match status" value="1"/>
</dbReference>
<dbReference type="SUPFAM" id="SSF46565">
    <property type="entry name" value="Chaperone J-domain"/>
    <property type="match status" value="1"/>
</dbReference>
<dbReference type="SUPFAM" id="SSF57938">
    <property type="entry name" value="DnaJ/Hsp40 cysteine-rich domain"/>
    <property type="match status" value="1"/>
</dbReference>
<dbReference type="SUPFAM" id="SSF49493">
    <property type="entry name" value="HSP40/DnaJ peptide-binding domain"/>
    <property type="match status" value="2"/>
</dbReference>
<dbReference type="PROSITE" id="PS00636">
    <property type="entry name" value="DNAJ_1"/>
    <property type="match status" value="1"/>
</dbReference>
<dbReference type="PROSITE" id="PS50076">
    <property type="entry name" value="DNAJ_2"/>
    <property type="match status" value="1"/>
</dbReference>
<dbReference type="PROSITE" id="PS51188">
    <property type="entry name" value="ZF_CR"/>
    <property type="match status" value="1"/>
</dbReference>
<feature type="chain" id="PRO_1000137724" description="Chaperone protein DnaJ">
    <location>
        <begin position="1"/>
        <end position="379"/>
    </location>
</feature>
<feature type="domain" description="J" evidence="1">
    <location>
        <begin position="5"/>
        <end position="70"/>
    </location>
</feature>
<feature type="repeat" description="CXXCXGXG motif">
    <location>
        <begin position="147"/>
        <end position="154"/>
    </location>
</feature>
<feature type="repeat" description="CXXCXGXG motif">
    <location>
        <begin position="164"/>
        <end position="171"/>
    </location>
</feature>
<feature type="repeat" description="CXXCXGXG motif">
    <location>
        <begin position="186"/>
        <end position="193"/>
    </location>
</feature>
<feature type="repeat" description="CXXCXGXG motif">
    <location>
        <begin position="200"/>
        <end position="207"/>
    </location>
</feature>
<feature type="zinc finger region" description="CR-type" evidence="1">
    <location>
        <begin position="134"/>
        <end position="212"/>
    </location>
</feature>
<feature type="binding site" evidence="1">
    <location>
        <position position="147"/>
    </location>
    <ligand>
        <name>Zn(2+)</name>
        <dbReference type="ChEBI" id="CHEBI:29105"/>
        <label>1</label>
    </ligand>
</feature>
<feature type="binding site" evidence="1">
    <location>
        <position position="150"/>
    </location>
    <ligand>
        <name>Zn(2+)</name>
        <dbReference type="ChEBI" id="CHEBI:29105"/>
        <label>1</label>
    </ligand>
</feature>
<feature type="binding site" evidence="1">
    <location>
        <position position="164"/>
    </location>
    <ligand>
        <name>Zn(2+)</name>
        <dbReference type="ChEBI" id="CHEBI:29105"/>
        <label>2</label>
    </ligand>
</feature>
<feature type="binding site" evidence="1">
    <location>
        <position position="167"/>
    </location>
    <ligand>
        <name>Zn(2+)</name>
        <dbReference type="ChEBI" id="CHEBI:29105"/>
        <label>2</label>
    </ligand>
</feature>
<feature type="binding site" evidence="1">
    <location>
        <position position="186"/>
    </location>
    <ligand>
        <name>Zn(2+)</name>
        <dbReference type="ChEBI" id="CHEBI:29105"/>
        <label>2</label>
    </ligand>
</feature>
<feature type="binding site" evidence="1">
    <location>
        <position position="189"/>
    </location>
    <ligand>
        <name>Zn(2+)</name>
        <dbReference type="ChEBI" id="CHEBI:29105"/>
        <label>2</label>
    </ligand>
</feature>
<feature type="binding site" evidence="1">
    <location>
        <position position="200"/>
    </location>
    <ligand>
        <name>Zn(2+)</name>
        <dbReference type="ChEBI" id="CHEBI:29105"/>
        <label>1</label>
    </ligand>
</feature>
<feature type="binding site" evidence="1">
    <location>
        <position position="203"/>
    </location>
    <ligand>
        <name>Zn(2+)</name>
        <dbReference type="ChEBI" id="CHEBI:29105"/>
        <label>1</label>
    </ligand>
</feature>
<reference key="1">
    <citation type="journal article" date="2011" name="J. Bacteriol.">
        <title>Comparative genomics of 28 Salmonella enterica isolates: evidence for CRISPR-mediated adaptive sublineage evolution.</title>
        <authorList>
            <person name="Fricke W.F."/>
            <person name="Mammel M.K."/>
            <person name="McDermott P.F."/>
            <person name="Tartera C."/>
            <person name="White D.G."/>
            <person name="Leclerc J.E."/>
            <person name="Ravel J."/>
            <person name="Cebula T.A."/>
        </authorList>
    </citation>
    <scope>NUCLEOTIDE SEQUENCE [LARGE SCALE GENOMIC DNA]</scope>
    <source>
        <strain>SL254</strain>
    </source>
</reference>